<keyword id="KW-0004">4Fe-4S</keyword>
<keyword id="KW-0408">Iron</keyword>
<keyword id="KW-0411">Iron-sulfur</keyword>
<keyword id="KW-0479">Metal-binding</keyword>
<keyword id="KW-0489">Methyltransferase</keyword>
<keyword id="KW-1185">Reference proteome</keyword>
<keyword id="KW-0949">S-adenosyl-L-methionine</keyword>
<keyword id="KW-0808">Transferase</keyword>
<proteinExistence type="inferred from homology"/>
<feature type="chain" id="PRO_0000162034" description="Uncharacterized RNA methyltransferase spr1717">
    <location>
        <begin position="1"/>
        <end position="451"/>
    </location>
</feature>
<feature type="domain" description="TRAM" evidence="2">
    <location>
        <begin position="2"/>
        <end position="60"/>
    </location>
</feature>
<feature type="active site" description="Nucleophile" evidence="3">
    <location>
        <position position="408"/>
    </location>
</feature>
<feature type="binding site" evidence="1">
    <location>
        <position position="73"/>
    </location>
    <ligand>
        <name>[4Fe-4S] cluster</name>
        <dbReference type="ChEBI" id="CHEBI:49883"/>
    </ligand>
</feature>
<feature type="binding site" evidence="1">
    <location>
        <position position="79"/>
    </location>
    <ligand>
        <name>[4Fe-4S] cluster</name>
        <dbReference type="ChEBI" id="CHEBI:49883"/>
    </ligand>
</feature>
<feature type="binding site" evidence="1">
    <location>
        <position position="82"/>
    </location>
    <ligand>
        <name>[4Fe-4S] cluster</name>
        <dbReference type="ChEBI" id="CHEBI:49883"/>
    </ligand>
</feature>
<feature type="binding site" evidence="1">
    <location>
        <position position="162"/>
    </location>
    <ligand>
        <name>[4Fe-4S] cluster</name>
        <dbReference type="ChEBI" id="CHEBI:49883"/>
    </ligand>
</feature>
<feature type="binding site" evidence="3">
    <location>
        <position position="283"/>
    </location>
    <ligand>
        <name>S-adenosyl-L-methionine</name>
        <dbReference type="ChEBI" id="CHEBI:59789"/>
    </ligand>
</feature>
<feature type="binding site" evidence="3">
    <location>
        <position position="312"/>
    </location>
    <ligand>
        <name>S-adenosyl-L-methionine</name>
        <dbReference type="ChEBI" id="CHEBI:59789"/>
    </ligand>
</feature>
<feature type="binding site" evidence="3">
    <location>
        <position position="333"/>
    </location>
    <ligand>
        <name>S-adenosyl-L-methionine</name>
        <dbReference type="ChEBI" id="CHEBI:59789"/>
    </ligand>
</feature>
<feature type="binding site" evidence="3">
    <location>
        <position position="381"/>
    </location>
    <ligand>
        <name>S-adenosyl-L-methionine</name>
        <dbReference type="ChEBI" id="CHEBI:59789"/>
    </ligand>
</feature>
<evidence type="ECO:0000250" key="1"/>
<evidence type="ECO:0000255" key="2">
    <source>
        <dbReference type="PROSITE-ProRule" id="PRU00208"/>
    </source>
</evidence>
<evidence type="ECO:0000255" key="3">
    <source>
        <dbReference type="PROSITE-ProRule" id="PRU01024"/>
    </source>
</evidence>
<organism>
    <name type="scientific">Streptococcus pneumoniae (strain ATCC BAA-255 / R6)</name>
    <dbReference type="NCBI Taxonomy" id="171101"/>
    <lineage>
        <taxon>Bacteria</taxon>
        <taxon>Bacillati</taxon>
        <taxon>Bacillota</taxon>
        <taxon>Bacilli</taxon>
        <taxon>Lactobacillales</taxon>
        <taxon>Streptococcaceae</taxon>
        <taxon>Streptococcus</taxon>
    </lineage>
</organism>
<dbReference type="EC" id="2.1.1.-"/>
<dbReference type="EMBL" id="AE007317">
    <property type="protein sequence ID" value="AAL00520.1"/>
    <property type="molecule type" value="Genomic_DNA"/>
</dbReference>
<dbReference type="PIR" id="C98086">
    <property type="entry name" value="C98086"/>
</dbReference>
<dbReference type="RefSeq" id="NP_359309.1">
    <property type="nucleotide sequence ID" value="NC_003098.1"/>
</dbReference>
<dbReference type="SMR" id="Q8DNH6"/>
<dbReference type="STRING" id="171101.spr1717"/>
<dbReference type="KEGG" id="spr:spr1717"/>
<dbReference type="PATRIC" id="fig|171101.6.peg.1857"/>
<dbReference type="eggNOG" id="COG2265">
    <property type="taxonomic scope" value="Bacteria"/>
</dbReference>
<dbReference type="HOGENOM" id="CLU_014689_7_1_9"/>
<dbReference type="Proteomes" id="UP000000586">
    <property type="component" value="Chromosome"/>
</dbReference>
<dbReference type="GO" id="GO:0051539">
    <property type="term" value="F:4 iron, 4 sulfur cluster binding"/>
    <property type="evidence" value="ECO:0007669"/>
    <property type="project" value="UniProtKB-KW"/>
</dbReference>
<dbReference type="GO" id="GO:0046872">
    <property type="term" value="F:metal ion binding"/>
    <property type="evidence" value="ECO:0007669"/>
    <property type="project" value="UniProtKB-KW"/>
</dbReference>
<dbReference type="GO" id="GO:0070041">
    <property type="term" value="F:rRNA (uridine-C5-)-methyltransferase activity"/>
    <property type="evidence" value="ECO:0000318"/>
    <property type="project" value="GO_Central"/>
</dbReference>
<dbReference type="GO" id="GO:0070475">
    <property type="term" value="P:rRNA base methylation"/>
    <property type="evidence" value="ECO:0000318"/>
    <property type="project" value="GO_Central"/>
</dbReference>
<dbReference type="CDD" id="cd02440">
    <property type="entry name" value="AdoMet_MTases"/>
    <property type="match status" value="1"/>
</dbReference>
<dbReference type="FunFam" id="3.40.50.150:FF:000009">
    <property type="entry name" value="23S rRNA (Uracil(1939)-C(5))-methyltransferase RlmD"/>
    <property type="match status" value="1"/>
</dbReference>
<dbReference type="FunFam" id="2.40.50.140:FF:000097">
    <property type="entry name" value="23S rRNA (uracil(1939)-C(5))-methyltransferase RlmD"/>
    <property type="match status" value="1"/>
</dbReference>
<dbReference type="FunFam" id="2.40.50.1070:FF:000003">
    <property type="entry name" value="23S rRNA (Uracil-5-)-methyltransferase RumA"/>
    <property type="match status" value="1"/>
</dbReference>
<dbReference type="Gene3D" id="2.40.50.1070">
    <property type="match status" value="1"/>
</dbReference>
<dbReference type="Gene3D" id="2.40.50.140">
    <property type="entry name" value="Nucleic acid-binding proteins"/>
    <property type="match status" value="1"/>
</dbReference>
<dbReference type="Gene3D" id="3.40.50.150">
    <property type="entry name" value="Vaccinia Virus protein VP39"/>
    <property type="match status" value="1"/>
</dbReference>
<dbReference type="InterPro" id="IPR030390">
    <property type="entry name" value="MeTrfase_TrmA_AS"/>
</dbReference>
<dbReference type="InterPro" id="IPR030391">
    <property type="entry name" value="MeTrfase_TrmA_CS"/>
</dbReference>
<dbReference type="InterPro" id="IPR012340">
    <property type="entry name" value="NA-bd_OB-fold"/>
</dbReference>
<dbReference type="InterPro" id="IPR029063">
    <property type="entry name" value="SAM-dependent_MTases_sf"/>
</dbReference>
<dbReference type="InterPro" id="IPR002792">
    <property type="entry name" value="TRAM_dom"/>
</dbReference>
<dbReference type="InterPro" id="IPR010280">
    <property type="entry name" value="U5_MeTrfase_fam"/>
</dbReference>
<dbReference type="NCBIfam" id="TIGR00479">
    <property type="entry name" value="rumA"/>
    <property type="match status" value="1"/>
</dbReference>
<dbReference type="PANTHER" id="PTHR11061:SF45">
    <property type="match status" value="1"/>
</dbReference>
<dbReference type="PANTHER" id="PTHR11061">
    <property type="entry name" value="RNA M5U METHYLTRANSFERASE"/>
    <property type="match status" value="1"/>
</dbReference>
<dbReference type="Pfam" id="PF01938">
    <property type="entry name" value="TRAM"/>
    <property type="match status" value="1"/>
</dbReference>
<dbReference type="Pfam" id="PF05958">
    <property type="entry name" value="tRNA_U5-meth_tr"/>
    <property type="match status" value="1"/>
</dbReference>
<dbReference type="SUPFAM" id="SSF50249">
    <property type="entry name" value="Nucleic acid-binding proteins"/>
    <property type="match status" value="1"/>
</dbReference>
<dbReference type="SUPFAM" id="SSF53335">
    <property type="entry name" value="S-adenosyl-L-methionine-dependent methyltransferases"/>
    <property type="match status" value="1"/>
</dbReference>
<dbReference type="PROSITE" id="PS51687">
    <property type="entry name" value="SAM_MT_RNA_M5U"/>
    <property type="match status" value="1"/>
</dbReference>
<dbReference type="PROSITE" id="PS50926">
    <property type="entry name" value="TRAM"/>
    <property type="match status" value="1"/>
</dbReference>
<dbReference type="PROSITE" id="PS01230">
    <property type="entry name" value="TRMA_1"/>
    <property type="match status" value="1"/>
</dbReference>
<dbReference type="PROSITE" id="PS01231">
    <property type="entry name" value="TRMA_2"/>
    <property type="match status" value="1"/>
</dbReference>
<name>Y1717_STRR6</name>
<sequence length="451" mass="51742">MNLKVKQKIPLKIKRMGINGEGIGFYQKTLVFVPGALKGEDIYCQITSIRRNFVEAKLLKVNKKSKFRIVPSCTIYNECGGCQIMHLHYDKQLEFKTDLLHQALKKFAPAGYENYEIRPTIGMQEPKYYRAKLQFQTRKFKNQVKAGLYAQNSHYLVELKDCLVQDKETQVIANRLAELLTYHQIPITDERKVLGVRTIMVRRARKTGQVQIIIVTNRQLNLTQLVKELVKDFPEVVTVAVNTNTAKTSEIYGEKTEIIWGQESIQEGVLNYEFSLSPRAFYQLNPEQTEVLYSEAVKALDVDKEDHLIDAYCGVGTIGFAFAKKVKTLRGMDIIPEAIEDAKRNAKRMGFDNTHYEAGTAEEIIPRWYKEGYRADALIVDPPRTGLDDKLLDTILTYVPEKMVYISCNVSTLARDLVRLVEVYDLHYIQSVDMFPHTARTEAVVKLIKKV</sequence>
<accession>Q8DNH6</accession>
<gene>
    <name type="ordered locus">spr1717</name>
</gene>
<reference key="1">
    <citation type="journal article" date="2001" name="J. Bacteriol.">
        <title>Genome of the bacterium Streptococcus pneumoniae strain R6.</title>
        <authorList>
            <person name="Hoskins J."/>
            <person name="Alborn W.E. Jr."/>
            <person name="Arnold J."/>
            <person name="Blaszczak L.C."/>
            <person name="Burgett S."/>
            <person name="DeHoff B.S."/>
            <person name="Estrem S.T."/>
            <person name="Fritz L."/>
            <person name="Fu D.-J."/>
            <person name="Fuller W."/>
            <person name="Geringer C."/>
            <person name="Gilmour R."/>
            <person name="Glass J.S."/>
            <person name="Khoja H."/>
            <person name="Kraft A.R."/>
            <person name="Lagace R.E."/>
            <person name="LeBlanc D.J."/>
            <person name="Lee L.N."/>
            <person name="Lefkowitz E.J."/>
            <person name="Lu J."/>
            <person name="Matsushima P."/>
            <person name="McAhren S.M."/>
            <person name="McHenney M."/>
            <person name="McLeaster K."/>
            <person name="Mundy C.W."/>
            <person name="Nicas T.I."/>
            <person name="Norris F.H."/>
            <person name="O'Gara M."/>
            <person name="Peery R.B."/>
            <person name="Robertson G.T."/>
            <person name="Rockey P."/>
            <person name="Sun P.-M."/>
            <person name="Winkler M.E."/>
            <person name="Yang Y."/>
            <person name="Young-Bellido M."/>
            <person name="Zhao G."/>
            <person name="Zook C.A."/>
            <person name="Baltz R.H."/>
            <person name="Jaskunas S.R."/>
            <person name="Rosteck P.R. Jr."/>
            <person name="Skatrud P.L."/>
            <person name="Glass J.I."/>
        </authorList>
    </citation>
    <scope>NUCLEOTIDE SEQUENCE [LARGE SCALE GENOMIC DNA]</scope>
    <source>
        <strain>ATCC BAA-255 / R6</strain>
    </source>
</reference>
<comment type="similarity">
    <text evidence="3">Belongs to the class I-like SAM-binding methyltransferase superfamily. RNA M5U methyltransferase family.</text>
</comment>
<protein>
    <recommendedName>
        <fullName>Uncharacterized RNA methyltransferase spr1717</fullName>
        <ecNumber>2.1.1.-</ecNumber>
    </recommendedName>
</protein>